<comment type="interaction">
    <interactant intactId="EBI-10171756">
        <id>A1A5C7</id>
    </interactant>
    <interactant intactId="EBI-10171774">
        <id>P60410</id>
        <label>KRTAP10-8</label>
    </interactant>
    <organismsDiffer>false</organismsDiffer>
    <experiments>3</experiments>
</comment>
<comment type="interaction">
    <interactant intactId="EBI-10171756">
        <id>A1A5C7</id>
    </interactant>
    <interactant intactId="EBI-3958099">
        <id>P26371</id>
        <label>KRTAP5-9</label>
    </interactant>
    <organismsDiffer>false</organismsDiffer>
    <experiments>3</experiments>
</comment>
<comment type="interaction">
    <interactant intactId="EBI-10171756">
        <id>A1A5C7</id>
    </interactant>
    <interactant intactId="EBI-945833">
        <id>Q7Z3S9</id>
        <label>NOTCH2NLA</label>
    </interactant>
    <organismsDiffer>false</organismsDiffer>
    <experiments>4</experiments>
</comment>
<comment type="interaction">
    <interactant intactId="EBI-12081840">
        <id>A1A5C7-2</id>
    </interactant>
    <interactant intactId="EBI-10225815">
        <id>Q08AM2</id>
        <label>ADAM33</label>
    </interactant>
    <organismsDiffer>false</organismsDiffer>
    <experiments>3</experiments>
</comment>
<comment type="interaction">
    <interactant intactId="EBI-12081840">
        <id>A1A5C7-2</id>
    </interactant>
    <interactant intactId="EBI-10827839">
        <id>Q15848</id>
        <label>ADIPOQ</label>
    </interactant>
    <organismsDiffer>false</organismsDiffer>
    <experiments>3</experiments>
</comment>
<comment type="interaction">
    <interactant intactId="EBI-12081840">
        <id>A1A5C7-2</id>
    </interactant>
    <interactant intactId="EBI-3953638">
        <id>P27352</id>
        <label>CBLIF</label>
    </interactant>
    <organismsDiffer>false</organismsDiffer>
    <experiments>3</experiments>
</comment>
<comment type="interaction">
    <interactant intactId="EBI-12081840">
        <id>A1A5C7-2</id>
    </interactant>
    <interactant intactId="EBI-6165897">
        <id>Q9NWW5</id>
        <label>CLN6</label>
    </interactant>
    <organismsDiffer>false</organismsDiffer>
    <experiments>3</experiments>
</comment>
<comment type="interaction">
    <interactant intactId="EBI-12081840">
        <id>A1A5C7-2</id>
    </interactant>
    <interactant intactId="EBI-12172273">
        <id>O95406</id>
        <label>CNIH1</label>
    </interactant>
    <organismsDiffer>false</organismsDiffer>
    <experiments>3</experiments>
</comment>
<comment type="interaction">
    <interactant intactId="EBI-12081840">
        <id>A1A5C7-2</id>
    </interactant>
    <interactant intactId="EBI-10976398">
        <id>Q7Z2K6</id>
        <label>ERMP1</label>
    </interactant>
    <organismsDiffer>false</organismsDiffer>
    <experiments>3</experiments>
</comment>
<comment type="interaction">
    <interactant intactId="EBI-12081840">
        <id>A1A5C7-2</id>
    </interactant>
    <interactant intactId="EBI-11749135">
        <id>Q8IUG1</id>
        <label>KRTAP1-3</label>
    </interactant>
    <organismsDiffer>false</organismsDiffer>
    <experiments>3</experiments>
</comment>
<comment type="interaction">
    <interactant intactId="EBI-12081840">
        <id>A1A5C7-2</id>
    </interactant>
    <interactant intactId="EBI-16439278">
        <id>Q6FHY5</id>
        <label>MEOX2</label>
    </interactant>
    <organismsDiffer>false</organismsDiffer>
    <experiments>3</experiments>
</comment>
<comment type="interaction">
    <interactant intactId="EBI-12081840">
        <id>A1A5C7-2</id>
    </interactant>
    <interactant intactId="EBI-2804156">
        <id>Q6UX06</id>
        <label>OLFM4</label>
    </interactant>
    <organismsDiffer>false</organismsDiffer>
    <experiments>3</experiments>
</comment>
<comment type="interaction">
    <interactant intactId="EBI-12081840">
        <id>A1A5C7-2</id>
    </interactant>
    <interactant intactId="EBI-3906138">
        <id>P53801</id>
        <label>PTTG1IP</label>
    </interactant>
    <organismsDiffer>false</organismsDiffer>
    <experiments>3</experiments>
</comment>
<comment type="interaction">
    <interactant intactId="EBI-12081840">
        <id>A1A5C7-2</id>
    </interactant>
    <interactant intactId="EBI-10179682">
        <id>O00526</id>
        <label>UPK2</label>
    </interactant>
    <organismsDiffer>false</organismsDiffer>
    <experiments>3</experiments>
</comment>
<comment type="interaction">
    <interactant intactId="EBI-12081840">
        <id>A1A5C7-2</id>
    </interactant>
    <interactant intactId="EBI-723529">
        <id>Q14508</id>
        <label>WFDC2</label>
    </interactant>
    <organismsDiffer>false</organismsDiffer>
    <experiments>3</experiments>
</comment>
<comment type="subcellular location">
    <subcellularLocation>
        <location evidence="4">Membrane</location>
        <topology evidence="4">Multi-pass membrane protein</topology>
    </subcellularLocation>
</comment>
<comment type="alternative products">
    <event type="alternative splicing"/>
    <isoform>
        <id>A1A5C7-1</id>
        <name>1</name>
        <sequence type="displayed"/>
    </isoform>
    <isoform>
        <id>A1A5C7-2</id>
        <name>2</name>
        <sequence type="described" ref="VSP_028954"/>
    </isoform>
    <isoform>
        <id>A1A5C7-3</id>
        <name>3</name>
        <sequence type="described" ref="VSP_028955"/>
    </isoform>
    <isoform>
        <id>A1A5C7-4</id>
        <name>4</name>
        <sequence type="described" ref="VSP_028956"/>
    </isoform>
</comment>
<comment type="similarity">
    <text evidence="4">Belongs to the major facilitator (TC 2.A.1) superfamily. Organic cation transporter (TC 2.A.1.19) family.</text>
</comment>
<comment type="sequence caution" evidence="4">
    <conflict type="erroneous initiation">
        <sequence resource="EMBL-CDS" id="BAD18753"/>
    </conflict>
</comment>
<reference key="1">
    <citation type="journal article" date="2003" name="Nature">
        <title>The DNA sequence and analysis of human chromosome 6.</title>
        <authorList>
            <person name="Mungall A.J."/>
            <person name="Palmer S.A."/>
            <person name="Sims S.K."/>
            <person name="Edwards C.A."/>
            <person name="Ashurst J.L."/>
            <person name="Wilming L."/>
            <person name="Jones M.C."/>
            <person name="Horton R."/>
            <person name="Hunt S.E."/>
            <person name="Scott C.E."/>
            <person name="Gilbert J.G.R."/>
            <person name="Clamp M.E."/>
            <person name="Bethel G."/>
            <person name="Milne S."/>
            <person name="Ainscough R."/>
            <person name="Almeida J.P."/>
            <person name="Ambrose K.D."/>
            <person name="Andrews T.D."/>
            <person name="Ashwell R.I.S."/>
            <person name="Babbage A.K."/>
            <person name="Bagguley C.L."/>
            <person name="Bailey J."/>
            <person name="Banerjee R."/>
            <person name="Barker D.J."/>
            <person name="Barlow K.F."/>
            <person name="Bates K."/>
            <person name="Beare D.M."/>
            <person name="Beasley H."/>
            <person name="Beasley O."/>
            <person name="Bird C.P."/>
            <person name="Blakey S.E."/>
            <person name="Bray-Allen S."/>
            <person name="Brook J."/>
            <person name="Brown A.J."/>
            <person name="Brown J.Y."/>
            <person name="Burford D.C."/>
            <person name="Burrill W."/>
            <person name="Burton J."/>
            <person name="Carder C."/>
            <person name="Carter N.P."/>
            <person name="Chapman J.C."/>
            <person name="Clark S.Y."/>
            <person name="Clark G."/>
            <person name="Clee C.M."/>
            <person name="Clegg S."/>
            <person name="Cobley V."/>
            <person name="Collier R.E."/>
            <person name="Collins J.E."/>
            <person name="Colman L.K."/>
            <person name="Corby N.R."/>
            <person name="Coville G.J."/>
            <person name="Culley K.M."/>
            <person name="Dhami P."/>
            <person name="Davies J."/>
            <person name="Dunn M."/>
            <person name="Earthrowl M.E."/>
            <person name="Ellington A.E."/>
            <person name="Evans K.A."/>
            <person name="Faulkner L."/>
            <person name="Francis M.D."/>
            <person name="Frankish A."/>
            <person name="Frankland J."/>
            <person name="French L."/>
            <person name="Garner P."/>
            <person name="Garnett J."/>
            <person name="Ghori M.J."/>
            <person name="Gilby L.M."/>
            <person name="Gillson C.J."/>
            <person name="Glithero R.J."/>
            <person name="Grafham D.V."/>
            <person name="Grant M."/>
            <person name="Gribble S."/>
            <person name="Griffiths C."/>
            <person name="Griffiths M.N.D."/>
            <person name="Hall R."/>
            <person name="Halls K.S."/>
            <person name="Hammond S."/>
            <person name="Harley J.L."/>
            <person name="Hart E.A."/>
            <person name="Heath P.D."/>
            <person name="Heathcott R."/>
            <person name="Holmes S.J."/>
            <person name="Howden P.J."/>
            <person name="Howe K.L."/>
            <person name="Howell G.R."/>
            <person name="Huckle E."/>
            <person name="Humphray S.J."/>
            <person name="Humphries M.D."/>
            <person name="Hunt A.R."/>
            <person name="Johnson C.M."/>
            <person name="Joy A.A."/>
            <person name="Kay M."/>
            <person name="Keenan S.J."/>
            <person name="Kimberley A.M."/>
            <person name="King A."/>
            <person name="Laird G.K."/>
            <person name="Langford C."/>
            <person name="Lawlor S."/>
            <person name="Leongamornlert D.A."/>
            <person name="Leversha M."/>
            <person name="Lloyd C.R."/>
            <person name="Lloyd D.M."/>
            <person name="Loveland J.E."/>
            <person name="Lovell J."/>
            <person name="Martin S."/>
            <person name="Mashreghi-Mohammadi M."/>
            <person name="Maslen G.L."/>
            <person name="Matthews L."/>
            <person name="McCann O.T."/>
            <person name="McLaren S.J."/>
            <person name="McLay K."/>
            <person name="McMurray A."/>
            <person name="Moore M.J.F."/>
            <person name="Mullikin J.C."/>
            <person name="Niblett D."/>
            <person name="Nickerson T."/>
            <person name="Novik K.L."/>
            <person name="Oliver K."/>
            <person name="Overton-Larty E.K."/>
            <person name="Parker A."/>
            <person name="Patel R."/>
            <person name="Pearce A.V."/>
            <person name="Peck A.I."/>
            <person name="Phillimore B.J.C.T."/>
            <person name="Phillips S."/>
            <person name="Plumb R.W."/>
            <person name="Porter K.M."/>
            <person name="Ramsey Y."/>
            <person name="Ranby S.A."/>
            <person name="Rice C.M."/>
            <person name="Ross M.T."/>
            <person name="Searle S.M."/>
            <person name="Sehra H.K."/>
            <person name="Sheridan E."/>
            <person name="Skuce C.D."/>
            <person name="Smith S."/>
            <person name="Smith M."/>
            <person name="Spraggon L."/>
            <person name="Squares S.L."/>
            <person name="Steward C.A."/>
            <person name="Sycamore N."/>
            <person name="Tamlyn-Hall G."/>
            <person name="Tester J."/>
            <person name="Theaker A.J."/>
            <person name="Thomas D.W."/>
            <person name="Thorpe A."/>
            <person name="Tracey A."/>
            <person name="Tromans A."/>
            <person name="Tubby B."/>
            <person name="Wall M."/>
            <person name="Wallis J.M."/>
            <person name="West A.P."/>
            <person name="White S.S."/>
            <person name="Whitehead S.L."/>
            <person name="Whittaker H."/>
            <person name="Wild A."/>
            <person name="Willey D.J."/>
            <person name="Wilmer T.E."/>
            <person name="Wood J.M."/>
            <person name="Wray P.W."/>
            <person name="Wyatt J.C."/>
            <person name="Young L."/>
            <person name="Younger R.M."/>
            <person name="Bentley D.R."/>
            <person name="Coulson A."/>
            <person name="Durbin R.M."/>
            <person name="Hubbard T."/>
            <person name="Sulston J.E."/>
            <person name="Dunham I."/>
            <person name="Rogers J."/>
            <person name="Beck S."/>
        </authorList>
    </citation>
    <scope>NUCLEOTIDE SEQUENCE [LARGE SCALE GENOMIC DNA]</scope>
</reference>
<reference key="2">
    <citation type="journal article" date="2004" name="Genome Res.">
        <title>The status, quality, and expansion of the NIH full-length cDNA project: the Mammalian Gene Collection (MGC).</title>
        <authorList>
            <consortium name="The MGC Project Team"/>
        </authorList>
    </citation>
    <scope>NUCLEOTIDE SEQUENCE [LARGE SCALE MRNA] (ISOFORMS 2 AND 3)</scope>
    <scope>NUCLEOTIDE SEQUENCE [LARGE SCALE MRNA] OF 21-686 (ISOFORM 4)</scope>
    <source>
        <tissue>Ovary</tissue>
    </source>
</reference>
<reference key="3">
    <citation type="journal article" date="2004" name="Nat. Genet.">
        <title>Complete sequencing and characterization of 21,243 full-length human cDNAs.</title>
        <authorList>
            <person name="Ota T."/>
            <person name="Suzuki Y."/>
            <person name="Nishikawa T."/>
            <person name="Otsuki T."/>
            <person name="Sugiyama T."/>
            <person name="Irie R."/>
            <person name="Wakamatsu A."/>
            <person name="Hayashi K."/>
            <person name="Sato H."/>
            <person name="Nagai K."/>
            <person name="Kimura K."/>
            <person name="Makita H."/>
            <person name="Sekine M."/>
            <person name="Obayashi M."/>
            <person name="Nishi T."/>
            <person name="Shibahara T."/>
            <person name="Tanaka T."/>
            <person name="Ishii S."/>
            <person name="Yamamoto J."/>
            <person name="Saito K."/>
            <person name="Kawai Y."/>
            <person name="Isono Y."/>
            <person name="Nakamura Y."/>
            <person name="Nagahari K."/>
            <person name="Murakami K."/>
            <person name="Yasuda T."/>
            <person name="Iwayanagi T."/>
            <person name="Wagatsuma M."/>
            <person name="Shiratori A."/>
            <person name="Sudo H."/>
            <person name="Hosoiri T."/>
            <person name="Kaku Y."/>
            <person name="Kodaira H."/>
            <person name="Kondo H."/>
            <person name="Sugawara M."/>
            <person name="Takahashi M."/>
            <person name="Kanda K."/>
            <person name="Yokoi T."/>
            <person name="Furuya T."/>
            <person name="Kikkawa E."/>
            <person name="Omura Y."/>
            <person name="Abe K."/>
            <person name="Kamihara K."/>
            <person name="Katsuta N."/>
            <person name="Sato K."/>
            <person name="Tanikawa M."/>
            <person name="Yamazaki M."/>
            <person name="Ninomiya K."/>
            <person name="Ishibashi T."/>
            <person name="Yamashita H."/>
            <person name="Murakawa K."/>
            <person name="Fujimori K."/>
            <person name="Tanai H."/>
            <person name="Kimata M."/>
            <person name="Watanabe M."/>
            <person name="Hiraoka S."/>
            <person name="Chiba Y."/>
            <person name="Ishida S."/>
            <person name="Ono Y."/>
            <person name="Takiguchi S."/>
            <person name="Watanabe S."/>
            <person name="Yosida M."/>
            <person name="Hotuta T."/>
            <person name="Kusano J."/>
            <person name="Kanehori K."/>
            <person name="Takahashi-Fujii A."/>
            <person name="Hara H."/>
            <person name="Tanase T.-O."/>
            <person name="Nomura Y."/>
            <person name="Togiya S."/>
            <person name="Komai F."/>
            <person name="Hara R."/>
            <person name="Takeuchi K."/>
            <person name="Arita M."/>
            <person name="Imose N."/>
            <person name="Musashino K."/>
            <person name="Yuuki H."/>
            <person name="Oshima A."/>
            <person name="Sasaki N."/>
            <person name="Aotsuka S."/>
            <person name="Yoshikawa Y."/>
            <person name="Matsunawa H."/>
            <person name="Ichihara T."/>
            <person name="Shiohata N."/>
            <person name="Sano S."/>
            <person name="Moriya S."/>
            <person name="Momiyama H."/>
            <person name="Satoh N."/>
            <person name="Takami S."/>
            <person name="Terashima Y."/>
            <person name="Suzuki O."/>
            <person name="Nakagawa S."/>
            <person name="Senoh A."/>
            <person name="Mizoguchi H."/>
            <person name="Goto Y."/>
            <person name="Shimizu F."/>
            <person name="Wakebe H."/>
            <person name="Hishigaki H."/>
            <person name="Watanabe T."/>
            <person name="Sugiyama A."/>
            <person name="Takemoto M."/>
            <person name="Kawakami B."/>
            <person name="Yamazaki M."/>
            <person name="Watanabe K."/>
            <person name="Kumagai A."/>
            <person name="Itakura S."/>
            <person name="Fukuzumi Y."/>
            <person name="Fujimori Y."/>
            <person name="Komiyama M."/>
            <person name="Tashiro H."/>
            <person name="Tanigami A."/>
            <person name="Fujiwara T."/>
            <person name="Ono T."/>
            <person name="Yamada K."/>
            <person name="Fujii Y."/>
            <person name="Ozaki K."/>
            <person name="Hirao M."/>
            <person name="Ohmori Y."/>
            <person name="Kawabata A."/>
            <person name="Hikiji T."/>
            <person name="Kobatake N."/>
            <person name="Inagaki H."/>
            <person name="Ikema Y."/>
            <person name="Okamoto S."/>
            <person name="Okitani R."/>
            <person name="Kawakami T."/>
            <person name="Noguchi S."/>
            <person name="Itoh T."/>
            <person name="Shigeta K."/>
            <person name="Senba T."/>
            <person name="Matsumura K."/>
            <person name="Nakajima Y."/>
            <person name="Mizuno T."/>
            <person name="Morinaga M."/>
            <person name="Sasaki M."/>
            <person name="Togashi T."/>
            <person name="Oyama M."/>
            <person name="Hata H."/>
            <person name="Watanabe M."/>
            <person name="Komatsu T."/>
            <person name="Mizushima-Sugano J."/>
            <person name="Satoh T."/>
            <person name="Shirai Y."/>
            <person name="Takahashi Y."/>
            <person name="Nakagawa K."/>
            <person name="Okumura K."/>
            <person name="Nagase T."/>
            <person name="Nomura N."/>
            <person name="Kikuchi H."/>
            <person name="Masuho Y."/>
            <person name="Yamashita R."/>
            <person name="Nakai K."/>
            <person name="Yada T."/>
            <person name="Nakamura Y."/>
            <person name="Ohara O."/>
            <person name="Isogai T."/>
            <person name="Sugano S."/>
        </authorList>
    </citation>
    <scope>NUCLEOTIDE SEQUENCE [LARGE SCALE MRNA] OF 303-686</scope>
    <source>
        <tissue>Colon</tissue>
    </source>
</reference>
<reference key="4">
    <citation type="journal article" date="2007" name="Genomics">
        <title>Identification of six putative human transporters with structural similarity to the drug transporter SLC22 family.</title>
        <authorList>
            <person name="Jacobsson J.A."/>
            <person name="Haitina T."/>
            <person name="Lindblom J."/>
            <person name="Fredriksson R."/>
        </authorList>
    </citation>
    <scope>IDENTIFICATION</scope>
</reference>
<sequence length="686" mass="73748">MAIDRRREAAGGGPGRQPAPAEENGSLPPGDAAASAPLGGRAGPGGGAEIQPLPPLHPGGGPHPSCCSAAAAPSLLLLDYDGSVLPFLGGLGGGYQKTLVLLTWIPALFIGFSQFSDSFLLDQPNFWCRGAGKGTELAGVTTTGRGGDMGNWTSLPTTPFATAPWEAAGNRSNSSGADGGDTPPLPSPPDKGDNASNCDCRAWDYGIRAGLVQNVVSKWDLVCDNAWKVHIAKFSLLVGLIFGYLITGCIADWVGRRPVLLFSIIFILIFGLTVALSVNVTMFSTLRFFEGFCLAGIILTLYALRIELCPPGKRFMITMVASFVAMAGQFLMPGLAALCRDWQVLQALIICPFLLMLLYWSIFPESLRWLMATQQFESAKRLILHFTQKNRMNPEGDIKGVIPELEKELSRRPKKVCIVKVVGTRNLWKNIVVLCVNSLTGYGIHHCFARSMMGHEVKVPLLENFYADYYTTASIALVSCLAMCVVVRFLGRRGGLLLFMILTALASLLQLGLLNLIGKYSQHPDSGMSDSVKDKFSIAFSIVGMFASHAVGSLSVFFCAEITPTVIRCGGLGLVLASAGFGMLTAPIIELHNQKGYFLHHIIFACCTLICIICILLLPESRDQNLPENISNGEHYTRQPLLPHKKGEQPLLLTNAELKDYSGLHDAAAAGDTLPEGATANGMKAM</sequence>
<gene>
    <name type="primary">SLC22A23</name>
    <name type="synonym">C6orf85</name>
</gene>
<dbReference type="EMBL" id="AL160398">
    <property type="status" value="NOT_ANNOTATED_CDS"/>
    <property type="molecule type" value="Genomic_DNA"/>
</dbReference>
<dbReference type="EMBL" id="AL445309">
    <property type="status" value="NOT_ANNOTATED_CDS"/>
    <property type="molecule type" value="Genomic_DNA"/>
</dbReference>
<dbReference type="EMBL" id="BC040876">
    <property type="protein sequence ID" value="AAH40876.1"/>
    <property type="molecule type" value="mRNA"/>
</dbReference>
<dbReference type="EMBL" id="BC128580">
    <property type="protein sequence ID" value="AAI28581.1"/>
    <property type="molecule type" value="mRNA"/>
</dbReference>
<dbReference type="EMBL" id="BC128581">
    <property type="protein sequence ID" value="AAI28582.1"/>
    <property type="molecule type" value="mRNA"/>
</dbReference>
<dbReference type="EMBL" id="AK172770">
    <property type="protein sequence ID" value="BAD18753.1"/>
    <property type="status" value="ALT_INIT"/>
    <property type="molecule type" value="mRNA"/>
</dbReference>
<dbReference type="CCDS" id="CCDS34331.1">
    <molecule id="A1A5C7-2"/>
</dbReference>
<dbReference type="CCDS" id="CCDS47363.1">
    <molecule id="A1A5C7-1"/>
</dbReference>
<dbReference type="CCDS" id="CCDS75389.1">
    <molecule id="A1A5C7-4"/>
</dbReference>
<dbReference type="RefSeq" id="NP_001273384.1">
    <molecule id="A1A5C7-2"/>
    <property type="nucleotide sequence ID" value="NM_001286455.1"/>
</dbReference>
<dbReference type="RefSeq" id="NP_001273385.1">
    <molecule id="A1A5C7-4"/>
    <property type="nucleotide sequence ID" value="NM_001286456.2"/>
</dbReference>
<dbReference type="RefSeq" id="NP_056297.1">
    <molecule id="A1A5C7-1"/>
    <property type="nucleotide sequence ID" value="NM_015482.2"/>
</dbReference>
<dbReference type="RefSeq" id="NP_068764.3">
    <molecule id="A1A5C7-2"/>
    <property type="nucleotide sequence ID" value="NM_021945.6"/>
</dbReference>
<dbReference type="RefSeq" id="XP_016866670.1">
    <property type="nucleotide sequence ID" value="XM_017011181.1"/>
</dbReference>
<dbReference type="RefSeq" id="XP_016866675.1">
    <molecule id="A1A5C7-2"/>
    <property type="nucleotide sequence ID" value="XM_017011186.2"/>
</dbReference>
<dbReference type="SMR" id="A1A5C7"/>
<dbReference type="BioGRID" id="121960">
    <property type="interactions" value="37"/>
</dbReference>
<dbReference type="FunCoup" id="A1A5C7">
    <property type="interactions" value="298"/>
</dbReference>
<dbReference type="IntAct" id="A1A5C7">
    <property type="interactions" value="31"/>
</dbReference>
<dbReference type="STRING" id="9606.ENSP00000385028"/>
<dbReference type="TCDB" id="2.A.1.19.28">
    <property type="family name" value="the major facilitator superfamily (mfs)"/>
</dbReference>
<dbReference type="GlyCosmos" id="A1A5C7">
    <property type="glycosylation" value="2 sites, No reported glycans"/>
</dbReference>
<dbReference type="GlyGen" id="A1A5C7">
    <property type="glycosylation" value="4 sites, 1 O-linked glycan (2 sites)"/>
</dbReference>
<dbReference type="iPTMnet" id="A1A5C7"/>
<dbReference type="PhosphoSitePlus" id="A1A5C7"/>
<dbReference type="SwissPalm" id="A1A5C7"/>
<dbReference type="BioMuta" id="SLC22A23"/>
<dbReference type="jPOST" id="A1A5C7"/>
<dbReference type="MassIVE" id="A1A5C7"/>
<dbReference type="PaxDb" id="9606-ENSP00000385028"/>
<dbReference type="PeptideAtlas" id="A1A5C7"/>
<dbReference type="ProteomicsDB" id="113">
    <molecule id="A1A5C7-1"/>
</dbReference>
<dbReference type="ProteomicsDB" id="114">
    <molecule id="A1A5C7-2"/>
</dbReference>
<dbReference type="ProteomicsDB" id="115">
    <molecule id="A1A5C7-3"/>
</dbReference>
<dbReference type="ProteomicsDB" id="116">
    <molecule id="A1A5C7-4"/>
</dbReference>
<dbReference type="Antibodypedia" id="9497">
    <property type="antibodies" value="60 antibodies from 19 providers"/>
</dbReference>
<dbReference type="DNASU" id="63027"/>
<dbReference type="Ensembl" id="ENST00000380298.2">
    <molecule id="A1A5C7-4"/>
    <property type="protein sequence ID" value="ENSP00000369653.2"/>
    <property type="gene ID" value="ENSG00000137266.15"/>
</dbReference>
<dbReference type="Ensembl" id="ENST00000380302.8">
    <molecule id="A1A5C7-2"/>
    <property type="protein sequence ID" value="ENSP00000369657.4"/>
    <property type="gene ID" value="ENSG00000137266.15"/>
</dbReference>
<dbReference type="Ensembl" id="ENST00000406686.8">
    <molecule id="A1A5C7-1"/>
    <property type="protein sequence ID" value="ENSP00000385028.3"/>
    <property type="gene ID" value="ENSG00000137266.15"/>
</dbReference>
<dbReference type="Ensembl" id="ENST00000490273.5">
    <molecule id="A1A5C7-2"/>
    <property type="protein sequence ID" value="ENSP00000419463.1"/>
    <property type="gene ID" value="ENSG00000137266.15"/>
</dbReference>
<dbReference type="GeneID" id="63027"/>
<dbReference type="KEGG" id="hsa:63027"/>
<dbReference type="MANE-Select" id="ENST00000406686.8">
    <property type="protein sequence ID" value="ENSP00000385028.3"/>
    <property type="RefSeq nucleotide sequence ID" value="NM_015482.2"/>
    <property type="RefSeq protein sequence ID" value="NP_056297.1"/>
</dbReference>
<dbReference type="UCSC" id="uc003mvm.5">
    <molecule id="A1A5C7-1"/>
    <property type="organism name" value="human"/>
</dbReference>
<dbReference type="AGR" id="HGNC:21106"/>
<dbReference type="CTD" id="63027"/>
<dbReference type="DisGeNET" id="63027"/>
<dbReference type="GeneCards" id="SLC22A23"/>
<dbReference type="HGNC" id="HGNC:21106">
    <property type="gene designation" value="SLC22A23"/>
</dbReference>
<dbReference type="HPA" id="ENSG00000137266">
    <property type="expression patterns" value="Low tissue specificity"/>
</dbReference>
<dbReference type="MIM" id="611697">
    <property type="type" value="gene"/>
</dbReference>
<dbReference type="neXtProt" id="NX_A1A5C7"/>
<dbReference type="OpenTargets" id="ENSG00000137266"/>
<dbReference type="PharmGKB" id="PA162403516"/>
<dbReference type="VEuPathDB" id="HostDB:ENSG00000137266"/>
<dbReference type="eggNOG" id="KOG0255">
    <property type="taxonomic scope" value="Eukaryota"/>
</dbReference>
<dbReference type="GeneTree" id="ENSGT00940000157354"/>
<dbReference type="HOGENOM" id="CLU_001265_33_6_1"/>
<dbReference type="InParanoid" id="A1A5C7"/>
<dbReference type="OMA" id="QKNCISP"/>
<dbReference type="OrthoDB" id="6884957at2759"/>
<dbReference type="PAN-GO" id="A1A5C7">
    <property type="GO annotations" value="0 GO annotations based on evolutionary models"/>
</dbReference>
<dbReference type="PhylomeDB" id="A1A5C7"/>
<dbReference type="TreeFam" id="TF335753"/>
<dbReference type="PathwayCommons" id="A1A5C7"/>
<dbReference type="SignaLink" id="A1A5C7"/>
<dbReference type="BioGRID-ORCS" id="63027">
    <property type="hits" value="12 hits in 1157 CRISPR screens"/>
</dbReference>
<dbReference type="ChiTaRS" id="SLC22A23">
    <property type="organism name" value="human"/>
</dbReference>
<dbReference type="GenomeRNAi" id="63027"/>
<dbReference type="Pharos" id="A1A5C7">
    <property type="development level" value="Tbio"/>
</dbReference>
<dbReference type="PRO" id="PR:A1A5C7"/>
<dbReference type="Proteomes" id="UP000005640">
    <property type="component" value="Chromosome 6"/>
</dbReference>
<dbReference type="RNAct" id="A1A5C7">
    <property type="molecule type" value="protein"/>
</dbReference>
<dbReference type="Bgee" id="ENSG00000137266">
    <property type="expression patterns" value="Expressed in pancreatic ductal cell and 175 other cell types or tissues"/>
</dbReference>
<dbReference type="ExpressionAtlas" id="A1A5C7">
    <property type="expression patterns" value="baseline and differential"/>
</dbReference>
<dbReference type="GO" id="GO:0005886">
    <property type="term" value="C:plasma membrane"/>
    <property type="evidence" value="ECO:0007669"/>
    <property type="project" value="UniProtKB-ARBA"/>
</dbReference>
<dbReference type="GO" id="GO:0022857">
    <property type="term" value="F:transmembrane transporter activity"/>
    <property type="evidence" value="ECO:0007669"/>
    <property type="project" value="InterPro"/>
</dbReference>
<dbReference type="GO" id="GO:0006811">
    <property type="term" value="P:monoatomic ion transport"/>
    <property type="evidence" value="ECO:0007669"/>
    <property type="project" value="UniProtKB-KW"/>
</dbReference>
<dbReference type="CDD" id="cd17444">
    <property type="entry name" value="MFS_SLC22A23"/>
    <property type="match status" value="1"/>
</dbReference>
<dbReference type="Gene3D" id="1.20.1250.20">
    <property type="entry name" value="MFS general substrate transporter like domains"/>
    <property type="match status" value="1"/>
</dbReference>
<dbReference type="InterPro" id="IPR020846">
    <property type="entry name" value="MFS_dom"/>
</dbReference>
<dbReference type="InterPro" id="IPR005828">
    <property type="entry name" value="MFS_sugar_transport-like"/>
</dbReference>
<dbReference type="InterPro" id="IPR036259">
    <property type="entry name" value="MFS_trans_sf"/>
</dbReference>
<dbReference type="InterPro" id="IPR005829">
    <property type="entry name" value="Sugar_transporter_CS"/>
</dbReference>
<dbReference type="PANTHER" id="PTHR24064">
    <property type="entry name" value="SOLUTE CARRIER FAMILY 22 MEMBER"/>
    <property type="match status" value="1"/>
</dbReference>
<dbReference type="Pfam" id="PF00083">
    <property type="entry name" value="Sugar_tr"/>
    <property type="match status" value="1"/>
</dbReference>
<dbReference type="SUPFAM" id="SSF103473">
    <property type="entry name" value="MFS general substrate transporter"/>
    <property type="match status" value="1"/>
</dbReference>
<dbReference type="PROSITE" id="PS50850">
    <property type="entry name" value="MFS"/>
    <property type="match status" value="1"/>
</dbReference>
<dbReference type="PROSITE" id="PS00216">
    <property type="entry name" value="SUGAR_TRANSPORT_1"/>
    <property type="match status" value="1"/>
</dbReference>
<proteinExistence type="evidence at protein level"/>
<keyword id="KW-0025">Alternative splicing</keyword>
<keyword id="KW-0325">Glycoprotein</keyword>
<keyword id="KW-0406">Ion transport</keyword>
<keyword id="KW-0472">Membrane</keyword>
<keyword id="KW-1267">Proteomics identification</keyword>
<keyword id="KW-1185">Reference proteome</keyword>
<keyword id="KW-0812">Transmembrane</keyword>
<keyword id="KW-1133">Transmembrane helix</keyword>
<keyword id="KW-0813">Transport</keyword>
<feature type="chain" id="PRO_0000308315" description="Solute carrier family 22 member 23">
    <location>
        <begin position="1"/>
        <end position="686"/>
    </location>
</feature>
<feature type="transmembrane region" description="Helical" evidence="1">
    <location>
        <begin position="234"/>
        <end position="254"/>
    </location>
</feature>
<feature type="transmembrane region" description="Helical" evidence="1">
    <location>
        <begin position="258"/>
        <end position="278"/>
    </location>
</feature>
<feature type="transmembrane region" description="Helical" evidence="1">
    <location>
        <begin position="288"/>
        <end position="308"/>
    </location>
</feature>
<feature type="transmembrane region" description="Helical" evidence="1">
    <location>
        <begin position="315"/>
        <end position="335"/>
    </location>
</feature>
<feature type="transmembrane region" description="Helical" evidence="1">
    <location>
        <begin position="344"/>
        <end position="364"/>
    </location>
</feature>
<feature type="transmembrane region" description="Helical" evidence="1">
    <location>
        <begin position="467"/>
        <end position="487"/>
    </location>
</feature>
<feature type="transmembrane region" description="Helical" evidence="1">
    <location>
        <begin position="494"/>
        <end position="514"/>
    </location>
</feature>
<feature type="transmembrane region" description="Helical" evidence="1">
    <location>
        <begin position="538"/>
        <end position="558"/>
    </location>
</feature>
<feature type="transmembrane region" description="Helical" evidence="1">
    <location>
        <begin position="569"/>
        <end position="589"/>
    </location>
</feature>
<feature type="transmembrane region" description="Helical" evidence="1">
    <location>
        <begin position="598"/>
        <end position="618"/>
    </location>
</feature>
<feature type="region of interest" description="Disordered" evidence="2">
    <location>
        <begin position="1"/>
        <end position="62"/>
    </location>
</feature>
<feature type="region of interest" description="Disordered" evidence="2">
    <location>
        <begin position="169"/>
        <end position="193"/>
    </location>
</feature>
<feature type="glycosylation site" description="N-linked (GlcNAc...) asparagine" evidence="1">
    <location>
        <position position="24"/>
    </location>
</feature>
<feature type="glycosylation site" description="N-linked (GlcNAc...) asparagine" evidence="1">
    <location>
        <position position="279"/>
    </location>
</feature>
<feature type="splice variant" id="VSP_028955" description="In isoform 3." evidence="3">
    <location>
        <begin position="1"/>
        <end position="370"/>
    </location>
</feature>
<feature type="splice variant" id="VSP_028954" description="In isoform 2." evidence="3">
    <location>
        <begin position="1"/>
        <end position="281"/>
    </location>
</feature>
<feature type="splice variant" id="VSP_028956" description="In isoform 4." evidence="3">
    <location>
        <begin position="362"/>
        <end position="686"/>
    </location>
</feature>
<feature type="sequence conflict" description="In Ref. 3; BAD18753." evidence="4" ref="3">
    <original>A</original>
    <variation>G</variation>
    <location>
        <position position="685"/>
    </location>
</feature>
<accession>A1A5C7</accession>
<accession>A1A5C8</accession>
<accession>Q5T8B8</accession>
<accession>Q6ZMH3</accession>
<accession>Q8IW73</accession>
<evidence type="ECO:0000255" key="1"/>
<evidence type="ECO:0000256" key="2">
    <source>
        <dbReference type="SAM" id="MobiDB-lite"/>
    </source>
</evidence>
<evidence type="ECO:0000303" key="3">
    <source>
    </source>
</evidence>
<evidence type="ECO:0000305" key="4"/>
<protein>
    <recommendedName>
        <fullName>Solute carrier family 22 member 23</fullName>
    </recommendedName>
</protein>
<organism>
    <name type="scientific">Homo sapiens</name>
    <name type="common">Human</name>
    <dbReference type="NCBI Taxonomy" id="9606"/>
    <lineage>
        <taxon>Eukaryota</taxon>
        <taxon>Metazoa</taxon>
        <taxon>Chordata</taxon>
        <taxon>Craniata</taxon>
        <taxon>Vertebrata</taxon>
        <taxon>Euteleostomi</taxon>
        <taxon>Mammalia</taxon>
        <taxon>Eutheria</taxon>
        <taxon>Euarchontoglires</taxon>
        <taxon>Primates</taxon>
        <taxon>Haplorrhini</taxon>
        <taxon>Catarrhini</taxon>
        <taxon>Hominidae</taxon>
        <taxon>Homo</taxon>
    </lineage>
</organism>
<name>S22AN_HUMAN</name>